<name>AROE_BACC0</name>
<accession>B7JNW6</accession>
<keyword id="KW-0028">Amino-acid biosynthesis</keyword>
<keyword id="KW-0057">Aromatic amino acid biosynthesis</keyword>
<keyword id="KW-0521">NADP</keyword>
<keyword id="KW-0560">Oxidoreductase</keyword>
<evidence type="ECO:0000255" key="1">
    <source>
        <dbReference type="HAMAP-Rule" id="MF_00222"/>
    </source>
</evidence>
<organism>
    <name type="scientific">Bacillus cereus (strain AH820)</name>
    <dbReference type="NCBI Taxonomy" id="405535"/>
    <lineage>
        <taxon>Bacteria</taxon>
        <taxon>Bacillati</taxon>
        <taxon>Bacillota</taxon>
        <taxon>Bacilli</taxon>
        <taxon>Bacillales</taxon>
        <taxon>Bacillaceae</taxon>
        <taxon>Bacillus</taxon>
        <taxon>Bacillus cereus group</taxon>
    </lineage>
</organism>
<gene>
    <name evidence="1" type="primary">aroE</name>
    <name type="ordered locus">BCAH820_4356</name>
</gene>
<reference key="1">
    <citation type="submission" date="2008-10" db="EMBL/GenBank/DDBJ databases">
        <title>Genome sequence of Bacillus cereus AH820.</title>
        <authorList>
            <person name="Dodson R.J."/>
            <person name="Durkin A.S."/>
            <person name="Rosovitz M.J."/>
            <person name="Rasko D.A."/>
            <person name="Hoffmaster A."/>
            <person name="Ravel J."/>
            <person name="Sutton G."/>
        </authorList>
    </citation>
    <scope>NUCLEOTIDE SEQUENCE [LARGE SCALE GENOMIC DNA]</scope>
    <source>
        <strain>AH820</strain>
    </source>
</reference>
<dbReference type="EC" id="1.1.1.25" evidence="1"/>
<dbReference type="EMBL" id="CP001283">
    <property type="protein sequence ID" value="ACK89240.1"/>
    <property type="molecule type" value="Genomic_DNA"/>
</dbReference>
<dbReference type="RefSeq" id="WP_000812089.1">
    <property type="nucleotide sequence ID" value="NC_011773.1"/>
</dbReference>
<dbReference type="SMR" id="B7JNW6"/>
<dbReference type="KEGG" id="bcu:BCAH820_4356"/>
<dbReference type="HOGENOM" id="CLU_044063_4_1_9"/>
<dbReference type="UniPathway" id="UPA00053">
    <property type="reaction ID" value="UER00087"/>
</dbReference>
<dbReference type="Proteomes" id="UP000001363">
    <property type="component" value="Chromosome"/>
</dbReference>
<dbReference type="GO" id="GO:0005829">
    <property type="term" value="C:cytosol"/>
    <property type="evidence" value="ECO:0007669"/>
    <property type="project" value="TreeGrafter"/>
</dbReference>
<dbReference type="GO" id="GO:0050661">
    <property type="term" value="F:NADP binding"/>
    <property type="evidence" value="ECO:0007669"/>
    <property type="project" value="InterPro"/>
</dbReference>
<dbReference type="GO" id="GO:0004764">
    <property type="term" value="F:shikimate 3-dehydrogenase (NADP+) activity"/>
    <property type="evidence" value="ECO:0007669"/>
    <property type="project" value="UniProtKB-UniRule"/>
</dbReference>
<dbReference type="GO" id="GO:0008652">
    <property type="term" value="P:amino acid biosynthetic process"/>
    <property type="evidence" value="ECO:0007669"/>
    <property type="project" value="UniProtKB-KW"/>
</dbReference>
<dbReference type="GO" id="GO:0009073">
    <property type="term" value="P:aromatic amino acid family biosynthetic process"/>
    <property type="evidence" value="ECO:0007669"/>
    <property type="project" value="UniProtKB-KW"/>
</dbReference>
<dbReference type="GO" id="GO:0009423">
    <property type="term" value="P:chorismate biosynthetic process"/>
    <property type="evidence" value="ECO:0007669"/>
    <property type="project" value="UniProtKB-UniRule"/>
</dbReference>
<dbReference type="GO" id="GO:0019632">
    <property type="term" value="P:shikimate metabolic process"/>
    <property type="evidence" value="ECO:0007669"/>
    <property type="project" value="InterPro"/>
</dbReference>
<dbReference type="CDD" id="cd01065">
    <property type="entry name" value="NAD_bind_Shikimate_DH"/>
    <property type="match status" value="1"/>
</dbReference>
<dbReference type="FunFam" id="3.40.50.10860:FF:000011">
    <property type="entry name" value="Shikimate dehydrogenase (NADP(+))"/>
    <property type="match status" value="1"/>
</dbReference>
<dbReference type="FunFam" id="3.40.50.720:FF:000257">
    <property type="entry name" value="Shikimate dehydrogenase (NADP(+))"/>
    <property type="match status" value="1"/>
</dbReference>
<dbReference type="Gene3D" id="3.40.50.10860">
    <property type="entry name" value="Leucine Dehydrogenase, chain A, domain 1"/>
    <property type="match status" value="1"/>
</dbReference>
<dbReference type="Gene3D" id="3.40.50.720">
    <property type="entry name" value="NAD(P)-binding Rossmann-like Domain"/>
    <property type="match status" value="1"/>
</dbReference>
<dbReference type="HAMAP" id="MF_00222">
    <property type="entry name" value="Shikimate_DH_AroE"/>
    <property type="match status" value="1"/>
</dbReference>
<dbReference type="InterPro" id="IPR046346">
    <property type="entry name" value="Aminoacid_DH-like_N_sf"/>
</dbReference>
<dbReference type="InterPro" id="IPR036291">
    <property type="entry name" value="NAD(P)-bd_dom_sf"/>
</dbReference>
<dbReference type="InterPro" id="IPR041121">
    <property type="entry name" value="SDH_C"/>
</dbReference>
<dbReference type="InterPro" id="IPR011342">
    <property type="entry name" value="Shikimate_DH"/>
</dbReference>
<dbReference type="InterPro" id="IPR013708">
    <property type="entry name" value="Shikimate_DH-bd_N"/>
</dbReference>
<dbReference type="InterPro" id="IPR022893">
    <property type="entry name" value="Shikimate_DH_fam"/>
</dbReference>
<dbReference type="InterPro" id="IPR006151">
    <property type="entry name" value="Shikm_DH/Glu-tRNA_Rdtase"/>
</dbReference>
<dbReference type="NCBIfam" id="TIGR00507">
    <property type="entry name" value="aroE"/>
    <property type="match status" value="1"/>
</dbReference>
<dbReference type="NCBIfam" id="NF001319">
    <property type="entry name" value="PRK00258.3-3"/>
    <property type="match status" value="1"/>
</dbReference>
<dbReference type="PANTHER" id="PTHR21089:SF1">
    <property type="entry name" value="BIFUNCTIONAL 3-DEHYDROQUINATE DEHYDRATASE_SHIKIMATE DEHYDROGENASE, CHLOROPLASTIC"/>
    <property type="match status" value="1"/>
</dbReference>
<dbReference type="PANTHER" id="PTHR21089">
    <property type="entry name" value="SHIKIMATE DEHYDROGENASE"/>
    <property type="match status" value="1"/>
</dbReference>
<dbReference type="Pfam" id="PF18317">
    <property type="entry name" value="SDH_C"/>
    <property type="match status" value="1"/>
</dbReference>
<dbReference type="Pfam" id="PF01488">
    <property type="entry name" value="Shikimate_DH"/>
    <property type="match status" value="1"/>
</dbReference>
<dbReference type="Pfam" id="PF08501">
    <property type="entry name" value="Shikimate_dh_N"/>
    <property type="match status" value="1"/>
</dbReference>
<dbReference type="SUPFAM" id="SSF53223">
    <property type="entry name" value="Aminoacid dehydrogenase-like, N-terminal domain"/>
    <property type="match status" value="1"/>
</dbReference>
<dbReference type="SUPFAM" id="SSF51735">
    <property type="entry name" value="NAD(P)-binding Rossmann-fold domains"/>
    <property type="match status" value="1"/>
</dbReference>
<proteinExistence type="inferred from homology"/>
<sequence length="277" mass="30150">MKQLYGVIGNPIGHSLSPVMHNDAFEHLNMDAHYHAFLVKEEVLGEAVRGLKALGISGFNVTTPHKVAIMDYLDEIDPLAKQIGAVNTVVHKDGKLIGYNTDGIGFVRALQSISSEPLQEKRILLLGAGGASRAIYFSLADAGVKEIDVANRTVDKAKELIAACTATVHSVALSLEKATKEQGNYDIIIQTTTIGMHPRVEHTPLQISSLKKGTIVSDIIYNPFETKILCEAKEQGAIIQNGIDMFVYQGALAFEMWTGCVPNIERMKQLVIRKLGG</sequence>
<protein>
    <recommendedName>
        <fullName evidence="1">Shikimate dehydrogenase (NADP(+))</fullName>
        <shortName evidence="1">SDH</shortName>
        <ecNumber evidence="1">1.1.1.25</ecNumber>
    </recommendedName>
</protein>
<feature type="chain" id="PRO_1000118868" description="Shikimate dehydrogenase (NADP(+))">
    <location>
        <begin position="1"/>
        <end position="277"/>
    </location>
</feature>
<feature type="active site" description="Proton acceptor" evidence="1">
    <location>
        <position position="66"/>
    </location>
</feature>
<feature type="binding site" evidence="1">
    <location>
        <begin position="15"/>
        <end position="17"/>
    </location>
    <ligand>
        <name>shikimate</name>
        <dbReference type="ChEBI" id="CHEBI:36208"/>
    </ligand>
</feature>
<feature type="binding site" evidence="1">
    <location>
        <position position="62"/>
    </location>
    <ligand>
        <name>shikimate</name>
        <dbReference type="ChEBI" id="CHEBI:36208"/>
    </ligand>
</feature>
<feature type="binding site" evidence="1">
    <location>
        <position position="87"/>
    </location>
    <ligand>
        <name>shikimate</name>
        <dbReference type="ChEBI" id="CHEBI:36208"/>
    </ligand>
</feature>
<feature type="binding site" evidence="1">
    <location>
        <position position="102"/>
    </location>
    <ligand>
        <name>shikimate</name>
        <dbReference type="ChEBI" id="CHEBI:36208"/>
    </ligand>
</feature>
<feature type="binding site" evidence="1">
    <location>
        <begin position="127"/>
        <end position="131"/>
    </location>
    <ligand>
        <name>NADP(+)</name>
        <dbReference type="ChEBI" id="CHEBI:58349"/>
    </ligand>
</feature>
<feature type="binding site" evidence="1">
    <location>
        <begin position="151"/>
        <end position="156"/>
    </location>
    <ligand>
        <name>NADP(+)</name>
        <dbReference type="ChEBI" id="CHEBI:58349"/>
    </ligand>
</feature>
<feature type="binding site" evidence="1">
    <location>
        <position position="219"/>
    </location>
    <ligand>
        <name>NADP(+)</name>
        <dbReference type="ChEBI" id="CHEBI:58349"/>
    </ligand>
</feature>
<feature type="binding site" evidence="1">
    <location>
        <position position="221"/>
    </location>
    <ligand>
        <name>shikimate</name>
        <dbReference type="ChEBI" id="CHEBI:36208"/>
    </ligand>
</feature>
<feature type="binding site" evidence="1">
    <location>
        <position position="242"/>
    </location>
    <ligand>
        <name>NADP(+)</name>
        <dbReference type="ChEBI" id="CHEBI:58349"/>
    </ligand>
</feature>
<comment type="function">
    <text evidence="1">Involved in the biosynthesis of the chorismate, which leads to the biosynthesis of aromatic amino acids. Catalyzes the reversible NADPH linked reduction of 3-dehydroshikimate (DHSA) to yield shikimate (SA).</text>
</comment>
<comment type="catalytic activity">
    <reaction evidence="1">
        <text>shikimate + NADP(+) = 3-dehydroshikimate + NADPH + H(+)</text>
        <dbReference type="Rhea" id="RHEA:17737"/>
        <dbReference type="ChEBI" id="CHEBI:15378"/>
        <dbReference type="ChEBI" id="CHEBI:16630"/>
        <dbReference type="ChEBI" id="CHEBI:36208"/>
        <dbReference type="ChEBI" id="CHEBI:57783"/>
        <dbReference type="ChEBI" id="CHEBI:58349"/>
        <dbReference type="EC" id="1.1.1.25"/>
    </reaction>
</comment>
<comment type="pathway">
    <text evidence="1">Metabolic intermediate biosynthesis; chorismate biosynthesis; chorismate from D-erythrose 4-phosphate and phosphoenolpyruvate: step 4/7.</text>
</comment>
<comment type="subunit">
    <text evidence="1">Homodimer.</text>
</comment>
<comment type="similarity">
    <text evidence="1">Belongs to the shikimate dehydrogenase family.</text>
</comment>